<keyword id="KW-0326">Glycosidase</keyword>
<keyword id="KW-0378">Hydrolase</keyword>
<keyword id="KW-0456">Lyase</keyword>
<keyword id="KW-0464">Manganese</keyword>
<keyword id="KW-0479">Metal-binding</keyword>
<keyword id="KW-1185">Reference proteome</keyword>
<protein>
    <recommendedName>
        <fullName evidence="1">Pseudouridine-5'-phosphate glycosidase</fullName>
        <shortName evidence="1">PsiMP glycosidase</shortName>
        <ecNumber evidence="1">4.2.1.70</ecNumber>
    </recommendedName>
</protein>
<organism>
    <name type="scientific">Frankia alni (strain DSM 45986 / CECT 9034 / ACN14a)</name>
    <dbReference type="NCBI Taxonomy" id="326424"/>
    <lineage>
        <taxon>Bacteria</taxon>
        <taxon>Bacillati</taxon>
        <taxon>Actinomycetota</taxon>
        <taxon>Actinomycetes</taxon>
        <taxon>Frankiales</taxon>
        <taxon>Frankiaceae</taxon>
        <taxon>Frankia</taxon>
    </lineage>
</organism>
<reference key="1">
    <citation type="journal article" date="2007" name="Genome Res.">
        <title>Genome characteristics of facultatively symbiotic Frankia sp. strains reflect host range and host plant biogeography.</title>
        <authorList>
            <person name="Normand P."/>
            <person name="Lapierre P."/>
            <person name="Tisa L.S."/>
            <person name="Gogarten J.P."/>
            <person name="Alloisio N."/>
            <person name="Bagnarol E."/>
            <person name="Bassi C.A."/>
            <person name="Berry A.M."/>
            <person name="Bickhart D.M."/>
            <person name="Choisne N."/>
            <person name="Couloux A."/>
            <person name="Cournoyer B."/>
            <person name="Cruveiller S."/>
            <person name="Daubin V."/>
            <person name="Demange N."/>
            <person name="Francino M.P."/>
            <person name="Goltsman E."/>
            <person name="Huang Y."/>
            <person name="Kopp O.R."/>
            <person name="Labarre L."/>
            <person name="Lapidus A."/>
            <person name="Lavire C."/>
            <person name="Marechal J."/>
            <person name="Martinez M."/>
            <person name="Mastronunzio J.E."/>
            <person name="Mullin B.C."/>
            <person name="Niemann J."/>
            <person name="Pujic P."/>
            <person name="Rawnsley T."/>
            <person name="Rouy Z."/>
            <person name="Schenowitz C."/>
            <person name="Sellstedt A."/>
            <person name="Tavares F."/>
            <person name="Tomkins J.P."/>
            <person name="Vallenet D."/>
            <person name="Valverde C."/>
            <person name="Wall L.G."/>
            <person name="Wang Y."/>
            <person name="Medigue C."/>
            <person name="Benson D.R."/>
        </authorList>
    </citation>
    <scope>NUCLEOTIDE SEQUENCE [LARGE SCALE GENOMIC DNA]</scope>
    <source>
        <strain>DSM 45986 / CECT 9034 / ACN14a</strain>
    </source>
</reference>
<feature type="chain" id="PRO_0000390519" description="Pseudouridine-5'-phosphate glycosidase">
    <location>
        <begin position="1"/>
        <end position="361"/>
    </location>
</feature>
<feature type="region of interest" description="Disordered" evidence="2">
    <location>
        <begin position="306"/>
        <end position="361"/>
    </location>
</feature>
<feature type="compositionally biased region" description="Pro residues" evidence="2">
    <location>
        <begin position="312"/>
        <end position="333"/>
    </location>
</feature>
<feature type="compositionally biased region" description="Low complexity" evidence="2">
    <location>
        <begin position="334"/>
        <end position="354"/>
    </location>
</feature>
<feature type="active site" description="Proton donor" evidence="1">
    <location>
        <position position="27"/>
    </location>
</feature>
<feature type="active site" description="Nucleophile" evidence="1">
    <location>
        <position position="161"/>
    </location>
</feature>
<feature type="binding site" evidence="1">
    <location>
        <position position="88"/>
    </location>
    <ligand>
        <name>substrate</name>
    </ligand>
</feature>
<feature type="binding site" evidence="1">
    <location>
        <position position="108"/>
    </location>
    <ligand>
        <name>substrate</name>
    </ligand>
</feature>
<feature type="binding site" evidence="1">
    <location>
        <position position="140"/>
    </location>
    <ligand>
        <name>Mn(2+)</name>
        <dbReference type="ChEBI" id="CHEBI:29035"/>
    </ligand>
</feature>
<feature type="binding site" evidence="1">
    <location>
        <begin position="142"/>
        <end position="144"/>
    </location>
    <ligand>
        <name>substrate</name>
    </ligand>
</feature>
<sequence>MAGRSNIVVSATVRDALAAGAPVVALESTLIAHGLPRPRNRDVAVELEELARARGVTPATIAVIDGVPRVGLDEPDLRRIADDANVIKLSVRDLPVACATGWTGATTVASTALLAARVGIRLFATGGLGGVHRGAGDSFDESADLVTLAAMPITVVSAGVKSILDIGATLERLETLGITVVGYRTSTFPGFYLPHTTYDLDWRVGDAGQVAATMAAADLLGLTSAIVVANPLPTDQALDPALHDRVLADALAWATERGIRGKAVTPFLLETFHRETGGASLEVNINAVRNNVAVASDIALAWAAKDRSPTDPAAPDPTAPDPAAPDPTAPDPAAPDSAAPDLAGPDPSAPDPAAVARAHRP</sequence>
<evidence type="ECO:0000255" key="1">
    <source>
        <dbReference type="HAMAP-Rule" id="MF_01876"/>
    </source>
</evidence>
<evidence type="ECO:0000256" key="2">
    <source>
        <dbReference type="SAM" id="MobiDB-lite"/>
    </source>
</evidence>
<comment type="function">
    <text evidence="1">Catalyzes the reversible cleavage of pseudouridine 5'-phosphate (PsiMP) to ribose 5-phosphate and uracil. Functions biologically in the cleavage direction, as part of a pseudouridine degradation pathway.</text>
</comment>
<comment type="catalytic activity">
    <reaction evidence="1">
        <text>D-ribose 5-phosphate + uracil = psi-UMP + H2O</text>
        <dbReference type="Rhea" id="RHEA:18337"/>
        <dbReference type="ChEBI" id="CHEBI:15377"/>
        <dbReference type="ChEBI" id="CHEBI:17568"/>
        <dbReference type="ChEBI" id="CHEBI:58380"/>
        <dbReference type="ChEBI" id="CHEBI:78346"/>
        <dbReference type="EC" id="4.2.1.70"/>
    </reaction>
</comment>
<comment type="cofactor">
    <cofactor evidence="1">
        <name>Mn(2+)</name>
        <dbReference type="ChEBI" id="CHEBI:29035"/>
    </cofactor>
    <text evidence="1">Binds 1 Mn(2+) ion per subunit.</text>
</comment>
<comment type="subunit">
    <text evidence="1">Homotrimer.</text>
</comment>
<comment type="similarity">
    <text evidence="1">Belongs to the pseudouridine-5'-phosphate glycosidase family.</text>
</comment>
<gene>
    <name evidence="1" type="primary">psuG</name>
    <name type="ordered locus">FRAAL6645</name>
</gene>
<name>PSUG_FRAAA</name>
<proteinExistence type="inferred from homology"/>
<dbReference type="EC" id="4.2.1.70" evidence="1"/>
<dbReference type="EMBL" id="CT573213">
    <property type="protein sequence ID" value="CAJ65268.1"/>
    <property type="molecule type" value="Genomic_DNA"/>
</dbReference>
<dbReference type="RefSeq" id="WP_011607682.1">
    <property type="nucleotide sequence ID" value="NC_008278.1"/>
</dbReference>
<dbReference type="SMR" id="Q0RBB8"/>
<dbReference type="STRING" id="326424.FRAAL6645"/>
<dbReference type="KEGG" id="fal:FRAAL6645"/>
<dbReference type="eggNOG" id="COG2313">
    <property type="taxonomic scope" value="Bacteria"/>
</dbReference>
<dbReference type="HOGENOM" id="CLU_012201_0_1_11"/>
<dbReference type="OrthoDB" id="9805870at2"/>
<dbReference type="Proteomes" id="UP000000657">
    <property type="component" value="Chromosome"/>
</dbReference>
<dbReference type="GO" id="GO:0005737">
    <property type="term" value="C:cytoplasm"/>
    <property type="evidence" value="ECO:0007669"/>
    <property type="project" value="TreeGrafter"/>
</dbReference>
<dbReference type="GO" id="GO:0016798">
    <property type="term" value="F:hydrolase activity, acting on glycosyl bonds"/>
    <property type="evidence" value="ECO:0007669"/>
    <property type="project" value="UniProtKB-KW"/>
</dbReference>
<dbReference type="GO" id="GO:0046872">
    <property type="term" value="F:metal ion binding"/>
    <property type="evidence" value="ECO:0007669"/>
    <property type="project" value="UniProtKB-KW"/>
</dbReference>
<dbReference type="GO" id="GO:0004730">
    <property type="term" value="F:pseudouridylate synthase activity"/>
    <property type="evidence" value="ECO:0007669"/>
    <property type="project" value="UniProtKB-UniRule"/>
</dbReference>
<dbReference type="GO" id="GO:0046113">
    <property type="term" value="P:nucleobase catabolic process"/>
    <property type="evidence" value="ECO:0007669"/>
    <property type="project" value="UniProtKB-UniRule"/>
</dbReference>
<dbReference type="Gene3D" id="3.40.1790.10">
    <property type="entry name" value="Indigoidine synthase domain"/>
    <property type="match status" value="1"/>
</dbReference>
<dbReference type="HAMAP" id="MF_01876">
    <property type="entry name" value="PsiMP_glycosidase"/>
    <property type="match status" value="1"/>
</dbReference>
<dbReference type="InterPro" id="IPR022830">
    <property type="entry name" value="Indigdn_synthA-like"/>
</dbReference>
<dbReference type="InterPro" id="IPR007342">
    <property type="entry name" value="PsuG"/>
</dbReference>
<dbReference type="PANTHER" id="PTHR42909:SF1">
    <property type="entry name" value="CARBOHYDRATE KINASE PFKB DOMAIN-CONTAINING PROTEIN"/>
    <property type="match status" value="1"/>
</dbReference>
<dbReference type="PANTHER" id="PTHR42909">
    <property type="entry name" value="ZGC:136858"/>
    <property type="match status" value="1"/>
</dbReference>
<dbReference type="Pfam" id="PF04227">
    <property type="entry name" value="Indigoidine_A"/>
    <property type="match status" value="1"/>
</dbReference>
<dbReference type="SUPFAM" id="SSF110581">
    <property type="entry name" value="Indigoidine synthase A-like"/>
    <property type="match status" value="1"/>
</dbReference>
<accession>Q0RBB8</accession>